<proteinExistence type="evidence at transcript level"/>
<keyword id="KW-0072">Autophagy</keyword>
<keyword id="KW-0963">Cytoplasm</keyword>
<keyword id="KW-0378">Hydrolase</keyword>
<keyword id="KW-0443">Lipid metabolism</keyword>
<keyword id="KW-0645">Protease</keyword>
<keyword id="KW-0653">Protein transport</keyword>
<keyword id="KW-1185">Reference proteome</keyword>
<keyword id="KW-0788">Thiol protease</keyword>
<keyword id="KW-0813">Transport</keyword>
<keyword id="KW-0833">Ubl conjugation pathway</keyword>
<accession>Q5R699</accession>
<evidence type="ECO:0000250" key="1">
    <source>
        <dbReference type="UniProtKB" id="Q8BGE6"/>
    </source>
</evidence>
<evidence type="ECO:0000250" key="2">
    <source>
        <dbReference type="UniProtKB" id="Q8WYN0"/>
    </source>
</evidence>
<evidence type="ECO:0000250" key="3">
    <source>
        <dbReference type="UniProtKB" id="Q9Y4P1"/>
    </source>
</evidence>
<evidence type="ECO:0000305" key="4"/>
<organism>
    <name type="scientific">Pongo abelii</name>
    <name type="common">Sumatran orangutan</name>
    <name type="synonym">Pongo pygmaeus abelii</name>
    <dbReference type="NCBI Taxonomy" id="9601"/>
    <lineage>
        <taxon>Eukaryota</taxon>
        <taxon>Metazoa</taxon>
        <taxon>Chordata</taxon>
        <taxon>Craniata</taxon>
        <taxon>Vertebrata</taxon>
        <taxon>Euteleostomi</taxon>
        <taxon>Mammalia</taxon>
        <taxon>Eutheria</taxon>
        <taxon>Euarchontoglires</taxon>
        <taxon>Primates</taxon>
        <taxon>Haplorrhini</taxon>
        <taxon>Catarrhini</taxon>
        <taxon>Hominidae</taxon>
        <taxon>Pongo</taxon>
    </lineage>
</organism>
<protein>
    <recommendedName>
        <fullName evidence="4">Cysteine protease ATG4A</fullName>
        <ecNumber evidence="2">3.4.22.-</ecNumber>
    </recommendedName>
    <alternativeName>
        <fullName evidence="2">Autophagy-related protein 4 homolog A</fullName>
    </alternativeName>
</protein>
<sequence length="398" mass="45260">MESVLSKYENQITIFTDYLEEYPDTDELVWILGKQHLLKTEKSKLLSDISARLWFTYRRKFSPIGGTGPSSDAGWGCMLRCGQMMLAQALICRHLGRDWSWEKQKEQPKEYQRILQCFLDRKDCCYSIHQMAQMGVGEGKSIGEWFGPNTVAQVLKKLALFDEWNSLAVYVSMDNTVVIEDIKKMCRVLPLGADTAGDRPPDSLTASNLSKGTSAYCSAWKPLLLIVPLRLGINQINPVYVDAFKECFKMPQSLGALGGKPNNAYYFIGFLGDELIFLDPHTTQTFVDTGENGTVNDQTFHCLQSPQRMNILNLDPSVALGFFCKEEKDFDNWCSLVQKEILKENLRMFELVQKHPSHWPPFVPPAKPEVTTTGAEFIDSTEQLEEFDLEEDFEILSV</sequence>
<feature type="chain" id="PRO_0000215840" description="Cysteine protease ATG4A">
    <location>
        <begin position="1"/>
        <end position="398"/>
    </location>
</feature>
<feature type="short sequence motif" description="LIR" evidence="2">
    <location>
        <begin position="393"/>
        <end position="396"/>
    </location>
</feature>
<feature type="active site" description="Nucleophile" evidence="3">
    <location>
        <position position="77"/>
    </location>
</feature>
<feature type="active site" evidence="3">
    <location>
        <position position="279"/>
    </location>
</feature>
<feature type="active site" evidence="3">
    <location>
        <position position="281"/>
    </location>
</feature>
<dbReference type="EC" id="3.4.22.-" evidence="2"/>
<dbReference type="EMBL" id="CR860595">
    <property type="protein sequence ID" value="CAH92717.1"/>
    <property type="molecule type" value="mRNA"/>
</dbReference>
<dbReference type="RefSeq" id="NP_001126588.1">
    <property type="nucleotide sequence ID" value="NM_001133116.1"/>
</dbReference>
<dbReference type="SMR" id="Q5R699"/>
<dbReference type="STRING" id="9601.ENSPPYP00000023081"/>
<dbReference type="MEROPS" id="C54.002"/>
<dbReference type="GeneID" id="100173580"/>
<dbReference type="KEGG" id="pon:100173580"/>
<dbReference type="CTD" id="115201"/>
<dbReference type="eggNOG" id="KOG2674">
    <property type="taxonomic scope" value="Eukaryota"/>
</dbReference>
<dbReference type="InParanoid" id="Q5R699"/>
<dbReference type="OrthoDB" id="2960936at2759"/>
<dbReference type="Proteomes" id="UP000001595">
    <property type="component" value="Unplaced"/>
</dbReference>
<dbReference type="GO" id="GO:0005737">
    <property type="term" value="C:cytoplasm"/>
    <property type="evidence" value="ECO:0007669"/>
    <property type="project" value="UniProtKB-SubCell"/>
</dbReference>
<dbReference type="GO" id="GO:0004197">
    <property type="term" value="F:cysteine-type endopeptidase activity"/>
    <property type="evidence" value="ECO:0007669"/>
    <property type="project" value="TreeGrafter"/>
</dbReference>
<dbReference type="GO" id="GO:0008234">
    <property type="term" value="F:cysteine-type peptidase activity"/>
    <property type="evidence" value="ECO:0000250"/>
    <property type="project" value="UniProtKB"/>
</dbReference>
<dbReference type="GO" id="GO:0019786">
    <property type="term" value="F:protein-phosphatidylethanolamide deconjugating activity"/>
    <property type="evidence" value="ECO:0000250"/>
    <property type="project" value="UniProtKB"/>
</dbReference>
<dbReference type="GO" id="GO:0035973">
    <property type="term" value="P:aggrephagy"/>
    <property type="evidence" value="ECO:0007669"/>
    <property type="project" value="TreeGrafter"/>
</dbReference>
<dbReference type="GO" id="GO:0000045">
    <property type="term" value="P:autophagosome assembly"/>
    <property type="evidence" value="ECO:0007669"/>
    <property type="project" value="TreeGrafter"/>
</dbReference>
<dbReference type="GO" id="GO:0006914">
    <property type="term" value="P:autophagy"/>
    <property type="evidence" value="ECO:0000250"/>
    <property type="project" value="UniProtKB"/>
</dbReference>
<dbReference type="GO" id="GO:0006629">
    <property type="term" value="P:lipid metabolic process"/>
    <property type="evidence" value="ECO:0007669"/>
    <property type="project" value="UniProtKB-KW"/>
</dbReference>
<dbReference type="GO" id="GO:0000423">
    <property type="term" value="P:mitophagy"/>
    <property type="evidence" value="ECO:0007669"/>
    <property type="project" value="TreeGrafter"/>
</dbReference>
<dbReference type="GO" id="GO:0034727">
    <property type="term" value="P:piecemeal microautophagy of the nucleus"/>
    <property type="evidence" value="ECO:0007669"/>
    <property type="project" value="TreeGrafter"/>
</dbReference>
<dbReference type="GO" id="GO:0051697">
    <property type="term" value="P:protein delipidation"/>
    <property type="evidence" value="ECO:0000250"/>
    <property type="project" value="UniProtKB"/>
</dbReference>
<dbReference type="GO" id="GO:0016485">
    <property type="term" value="P:protein processing"/>
    <property type="evidence" value="ECO:0007669"/>
    <property type="project" value="TreeGrafter"/>
</dbReference>
<dbReference type="GO" id="GO:0015031">
    <property type="term" value="P:protein transport"/>
    <property type="evidence" value="ECO:0007669"/>
    <property type="project" value="UniProtKB-KW"/>
</dbReference>
<dbReference type="InterPro" id="IPR046793">
    <property type="entry name" value="ATG4_LIR"/>
</dbReference>
<dbReference type="InterPro" id="IPR038765">
    <property type="entry name" value="Papain-like_cys_pep_sf"/>
</dbReference>
<dbReference type="InterPro" id="IPR005078">
    <property type="entry name" value="Peptidase_C54"/>
</dbReference>
<dbReference type="InterPro" id="IPR046792">
    <property type="entry name" value="Peptidase_C54_cat"/>
</dbReference>
<dbReference type="PANTHER" id="PTHR22624">
    <property type="entry name" value="CYSTEINE PROTEASE ATG4"/>
    <property type="match status" value="1"/>
</dbReference>
<dbReference type="PANTHER" id="PTHR22624:SF35">
    <property type="entry name" value="CYSTEINE PROTEASE ATG4A"/>
    <property type="match status" value="1"/>
</dbReference>
<dbReference type="Pfam" id="PF20166">
    <property type="entry name" value="ATG4_LIR"/>
    <property type="match status" value="1"/>
</dbReference>
<dbReference type="Pfam" id="PF03416">
    <property type="entry name" value="Peptidase_C54"/>
    <property type="match status" value="1"/>
</dbReference>
<dbReference type="SUPFAM" id="SSF54001">
    <property type="entry name" value="Cysteine proteinases"/>
    <property type="match status" value="1"/>
</dbReference>
<comment type="function">
    <text evidence="2">Cysteine protease that plays a key role in autophagy by mediating both proteolytic activation and delipidation of ATG8 family proteins. The protease activity is required for proteolytic activation of ATG8 family proteins: cleaves the C-terminal amino acid of ATG8 proteins to reveal a C-terminal glycine. Exposure of the glycine at the C-terminus is essential for ATG8 proteins conjugation to phosphatidylethanolamine (PE) and insertion to membranes, which is necessary for autophagy. Preferred substrate is GABARAPL2 followed by MAP1LC3A and GABARAP. Protease activity is also required to counteract formation of high-molecular weight conjugates of ATG8 proteins (ATG8ylation): acts as a deubiquitinating-like enzyme that removes ATG8 conjugated to other proteins, such as ATG3. In addition to the protease activity, also mediates delipidation of ATG8 family proteins. Catalyzes delipidation of PE-conjugated forms of ATG8 proteins during macroautophagy. Compared to ATG4B, the major protein for proteolytic activation of ATG8 proteins, shows weaker ability to cleave the C-terminal amino acid of ATG8 proteins, while it displays stronger delipidation activity. Involved in phagophore growth during mitophagy independently of its protease activity and of ATG8 proteins: acts by regulating ATG9A trafficking to mitochondria and promoting phagophore-endoplasmic reticulum contacts during the lipid transfer phase of mitophagy.</text>
</comment>
<comment type="catalytic activity">
    <reaction evidence="2">
        <text>[protein]-C-terminal L-amino acid-glycyl-phosphatidylethanolamide + H2O = [protein]-C-terminal L-amino acid-glycine + a 1,2-diacyl-sn-glycero-3-phosphoethanolamine</text>
        <dbReference type="Rhea" id="RHEA:67548"/>
        <dbReference type="Rhea" id="RHEA-COMP:17323"/>
        <dbReference type="Rhea" id="RHEA-COMP:17324"/>
        <dbReference type="ChEBI" id="CHEBI:15377"/>
        <dbReference type="ChEBI" id="CHEBI:64612"/>
        <dbReference type="ChEBI" id="CHEBI:172940"/>
        <dbReference type="ChEBI" id="CHEBI:172941"/>
    </reaction>
    <physiologicalReaction direction="left-to-right" evidence="2">
        <dbReference type="Rhea" id="RHEA:67549"/>
    </physiologicalReaction>
</comment>
<comment type="activity regulation">
    <text evidence="2">Inhibited by N-ethylmaleimide. Redox-regulated during autophagy since reducing conditions activate ATG4A whereas an oxidizing environment such as the presence of H(2)O(2) inhibits its activity.</text>
</comment>
<comment type="subunit">
    <text evidence="2">Interacts with ATG9A; the interaction is direct.</text>
</comment>
<comment type="subcellular location">
    <subcellularLocation>
        <location evidence="1">Cytoplasm</location>
    </subcellularLocation>
</comment>
<comment type="domain">
    <text evidence="2">The LIR motif (LC3-interacting region) is required for the interaction with the ATG8 family proteins. Required for proteolytic activation and delipidation of ATG8 proteins.</text>
</comment>
<comment type="similarity">
    <text evidence="4">Belongs to the peptidase C54 family.</text>
</comment>
<reference key="1">
    <citation type="submission" date="2004-11" db="EMBL/GenBank/DDBJ databases">
        <authorList>
            <consortium name="The German cDNA consortium"/>
        </authorList>
    </citation>
    <scope>NUCLEOTIDE SEQUENCE [LARGE SCALE MRNA]</scope>
    <source>
        <tissue>Brain cortex</tissue>
    </source>
</reference>
<gene>
    <name evidence="2" type="primary">ATG4A</name>
    <name evidence="2" type="synonym">APG4A</name>
</gene>
<name>ATG4A_PONAB</name>